<accession>P37339</accession>
<accession>P76622</accession>
<accession>P77020</accession>
<evidence type="ECO:0000255" key="1">
    <source>
        <dbReference type="HAMAP-Rule" id="MF_00990"/>
    </source>
</evidence>
<evidence type="ECO:0000269" key="2">
    <source>
    </source>
</evidence>
<evidence type="ECO:0000269" key="3">
    <source>
    </source>
</evidence>
<evidence type="ECO:0000269" key="4">
    <source>
    </source>
</evidence>
<evidence type="ECO:0000303" key="5">
    <source>
    </source>
</evidence>
<evidence type="ECO:0000303" key="6">
    <source>
    </source>
</evidence>
<evidence type="ECO:0000305" key="7">
    <source>
    </source>
</evidence>
<evidence type="ECO:0000305" key="8">
    <source>
    </source>
</evidence>
<sequence>MYDFVIIGGGIIGMSTAMQLIDVYPDARIALLEKESAPACHQTGHNSGVIHAGVYYTPGSLKAQFCLAGNRATKAFCDQNGIRYDNCGKMLVATSDLEMERMRALWERTAANGIEREWLNADELREREPNITGLGGIFVPSSGIVSYRDVTAAMAKIFQSRGGEIIYNAEVSGLNEHKNGVVIRTRQGGEYEASTLISCSGLMADRLVKMLGLEPGFIICPFRGEYFRLAPEHNQIVNHLIYPIPDPAMPFLGVHLTRMIDGSVTVGPNAVLAFKREGYRKRDFSFSDTLEILGSSGIRRVLQNHLRSGLGEMKNSLCKSGYLRLVQKYCPRLSLSDLQPWPAGVRAQAVSPDGKLIDDFLFVTTPRTIHTCNAPSPAATSAIPIGAHIVSKVQTLLASQSNPGRTLRAARSVDALHAAFNQ</sequence>
<gene>
    <name evidence="6" type="primary">lhgD</name>
    <name evidence="5" type="synonym">lhgO</name>
    <name type="synonym">ygaF</name>
    <name type="ordered locus">b2660</name>
    <name type="ordered locus">JW2635</name>
</gene>
<proteinExistence type="evidence at protein level"/>
<name>LHGD_ECOLI</name>
<feature type="chain" id="PRO_0000169295" description="L-2-hydroxyglutarate dehydrogenase">
    <location>
        <begin position="1"/>
        <end position="422"/>
    </location>
</feature>
<keyword id="KW-0997">Cell inner membrane</keyword>
<keyword id="KW-1003">Cell membrane</keyword>
<keyword id="KW-0249">Electron transport</keyword>
<keyword id="KW-0274">FAD</keyword>
<keyword id="KW-0285">Flavoprotein</keyword>
<keyword id="KW-0472">Membrane</keyword>
<keyword id="KW-0560">Oxidoreductase</keyword>
<keyword id="KW-1185">Reference proteome</keyword>
<keyword id="KW-0813">Transport</keyword>
<dbReference type="EC" id="1.1.5.13" evidence="4"/>
<dbReference type="EMBL" id="U00096">
    <property type="protein sequence ID" value="AAC75707.2"/>
    <property type="molecule type" value="Genomic_DNA"/>
</dbReference>
<dbReference type="EMBL" id="AP009048">
    <property type="protein sequence ID" value="BAA16521.1"/>
    <property type="molecule type" value="Genomic_DNA"/>
</dbReference>
<dbReference type="EMBL" id="M88334">
    <property type="status" value="NOT_ANNOTATED_CDS"/>
    <property type="molecule type" value="Genomic_DNA"/>
</dbReference>
<dbReference type="PIR" id="E65045">
    <property type="entry name" value="E65045"/>
</dbReference>
<dbReference type="RefSeq" id="NP_417146.2">
    <property type="nucleotide sequence ID" value="NC_000913.3"/>
</dbReference>
<dbReference type="RefSeq" id="WP_000271909.1">
    <property type="nucleotide sequence ID" value="NZ_LN832404.1"/>
</dbReference>
<dbReference type="SMR" id="P37339"/>
<dbReference type="BioGRID" id="4263106">
    <property type="interactions" value="14"/>
</dbReference>
<dbReference type="BioGRID" id="852377">
    <property type="interactions" value="1"/>
</dbReference>
<dbReference type="DIP" id="DIP-12096N"/>
<dbReference type="FunCoup" id="P37339">
    <property type="interactions" value="729"/>
</dbReference>
<dbReference type="IntAct" id="P37339">
    <property type="interactions" value="4"/>
</dbReference>
<dbReference type="STRING" id="511145.b2660"/>
<dbReference type="jPOST" id="P37339"/>
<dbReference type="PaxDb" id="511145-b2660"/>
<dbReference type="DNASU" id="948069"/>
<dbReference type="EnsemblBacteria" id="AAC75707">
    <property type="protein sequence ID" value="AAC75707"/>
    <property type="gene ID" value="b2660"/>
</dbReference>
<dbReference type="GeneID" id="948069"/>
<dbReference type="KEGG" id="ecj:JW2635"/>
<dbReference type="KEGG" id="eco:b2660"/>
<dbReference type="KEGG" id="ecoc:C3026_14665"/>
<dbReference type="PATRIC" id="fig|1411691.4.peg.4081"/>
<dbReference type="EchoBASE" id="EB2288"/>
<dbReference type="eggNOG" id="COG0579">
    <property type="taxonomic scope" value="Bacteria"/>
</dbReference>
<dbReference type="HOGENOM" id="CLU_024775_0_1_6"/>
<dbReference type="InParanoid" id="P37339"/>
<dbReference type="OMA" id="GVHFTRM"/>
<dbReference type="OrthoDB" id="9801699at2"/>
<dbReference type="PhylomeDB" id="P37339"/>
<dbReference type="BioCyc" id="EcoCyc:EG12387-MONOMER"/>
<dbReference type="BioCyc" id="MetaCyc:EG12387-MONOMER"/>
<dbReference type="SABIO-RK" id="P37339"/>
<dbReference type="PRO" id="PR:P37339"/>
<dbReference type="Proteomes" id="UP000000625">
    <property type="component" value="Chromosome"/>
</dbReference>
<dbReference type="GO" id="GO:0005737">
    <property type="term" value="C:cytoplasm"/>
    <property type="evidence" value="ECO:0000314"/>
    <property type="project" value="EcoliWiki"/>
</dbReference>
<dbReference type="GO" id="GO:0005886">
    <property type="term" value="C:plasma membrane"/>
    <property type="evidence" value="ECO:0000314"/>
    <property type="project" value="EcoCyc"/>
</dbReference>
<dbReference type="GO" id="GO:0140696">
    <property type="term" value="F:(S)-2-hydroxyglutarate dehydrogenase activity"/>
    <property type="evidence" value="ECO:0007669"/>
    <property type="project" value="UniProtKB-EC"/>
</dbReference>
<dbReference type="GO" id="GO:0047545">
    <property type="term" value="F:2-hydroxyglutarate dehydrogenase activity"/>
    <property type="evidence" value="ECO:0000314"/>
    <property type="project" value="EcoCyc"/>
</dbReference>
<dbReference type="GO" id="GO:0050660">
    <property type="term" value="F:flavin adenine dinucleotide binding"/>
    <property type="evidence" value="ECO:0000314"/>
    <property type="project" value="EcoCyc"/>
</dbReference>
<dbReference type="GO" id="GO:0019477">
    <property type="term" value="P:L-lysine catabolic process"/>
    <property type="evidence" value="ECO:0007669"/>
    <property type="project" value="UniProtKB-UniRule"/>
</dbReference>
<dbReference type="GO" id="GO:0006554">
    <property type="term" value="P:lysine catabolic process"/>
    <property type="evidence" value="ECO:0000269"/>
    <property type="project" value="EcoCyc"/>
</dbReference>
<dbReference type="Gene3D" id="3.30.9.10">
    <property type="entry name" value="D-Amino Acid Oxidase, subunit A, domain 2"/>
    <property type="match status" value="1"/>
</dbReference>
<dbReference type="Gene3D" id="3.50.50.60">
    <property type="entry name" value="FAD/NAD(P)-binding domain"/>
    <property type="match status" value="1"/>
</dbReference>
<dbReference type="HAMAP" id="MF_00990">
    <property type="entry name" value="L_hydroxyglutarate_dehydrogenase"/>
    <property type="match status" value="1"/>
</dbReference>
<dbReference type="InterPro" id="IPR006076">
    <property type="entry name" value="FAD-dep_OxRdtase"/>
</dbReference>
<dbReference type="InterPro" id="IPR036188">
    <property type="entry name" value="FAD/NAD-bd_sf"/>
</dbReference>
<dbReference type="InterPro" id="IPR030862">
    <property type="entry name" value="L2HG_DH_bact"/>
</dbReference>
<dbReference type="NCBIfam" id="NF008726">
    <property type="entry name" value="PRK11728.1"/>
    <property type="match status" value="1"/>
</dbReference>
<dbReference type="PANTHER" id="PTHR43104">
    <property type="entry name" value="L-2-HYDROXYGLUTARATE DEHYDROGENASE, MITOCHONDRIAL"/>
    <property type="match status" value="1"/>
</dbReference>
<dbReference type="PANTHER" id="PTHR43104:SF2">
    <property type="entry name" value="L-2-HYDROXYGLUTARATE DEHYDROGENASE, MITOCHONDRIAL"/>
    <property type="match status" value="1"/>
</dbReference>
<dbReference type="Pfam" id="PF01266">
    <property type="entry name" value="DAO"/>
    <property type="match status" value="1"/>
</dbReference>
<dbReference type="SUPFAM" id="SSF51905">
    <property type="entry name" value="FAD/NAD(P)-binding domain"/>
    <property type="match status" value="1"/>
</dbReference>
<protein>
    <recommendedName>
        <fullName evidence="6">L-2-hydroxyglutarate dehydrogenase</fullName>
        <shortName evidence="6">L2HG dehydrogenase</shortName>
        <ecNumber evidence="4">1.1.5.13</ecNumber>
    </recommendedName>
    <alternativeName>
        <fullName evidence="6">L2HG:quinone oxidoreductase</fullName>
    </alternativeName>
</protein>
<organism>
    <name type="scientific">Escherichia coli (strain K12)</name>
    <dbReference type="NCBI Taxonomy" id="83333"/>
    <lineage>
        <taxon>Bacteria</taxon>
        <taxon>Pseudomonadati</taxon>
        <taxon>Pseudomonadota</taxon>
        <taxon>Gammaproteobacteria</taxon>
        <taxon>Enterobacterales</taxon>
        <taxon>Enterobacteriaceae</taxon>
        <taxon>Escherichia</taxon>
    </lineage>
</organism>
<comment type="function">
    <text evidence="4">Catalyzes the dehydrogenation of L-2-hydroxyglutarate (L2HG) to alpha-ketoglutarate and couples to the respiratory chain by feeding electrons from the reaction into the membrane quinone pool. Functions in a L-lysine degradation pathway that proceeds via cadaverine, glutarate and L-2-hydroxyglutarate.</text>
</comment>
<comment type="catalytic activity">
    <reaction evidence="4">
        <text>(S)-2-hydroxyglutarate + a quinone = a quinol + 2-oxoglutarate</text>
        <dbReference type="Rhea" id="RHEA:58664"/>
        <dbReference type="ChEBI" id="CHEBI:16782"/>
        <dbReference type="ChEBI" id="CHEBI:16810"/>
        <dbReference type="ChEBI" id="CHEBI:24646"/>
        <dbReference type="ChEBI" id="CHEBI:132124"/>
        <dbReference type="EC" id="1.1.5.13"/>
    </reaction>
    <physiologicalReaction direction="left-to-right" evidence="8">
        <dbReference type="Rhea" id="RHEA:58665"/>
    </physiologicalReaction>
</comment>
<comment type="cofactor">
    <cofactor evidence="1 3 4">
        <name>FAD</name>
        <dbReference type="ChEBI" id="CHEBI:57692"/>
    </cofactor>
</comment>
<comment type="pathway">
    <text evidence="8">Amino-acid degradation.</text>
</comment>
<comment type="interaction">
    <interactant intactId="EBI-555990">
        <id>P37339</id>
    </interactant>
    <interactant intactId="EBI-555953">
        <id>P0A9L5</id>
        <label>ppiC</label>
    </interactant>
    <organismsDiffer>false</organismsDiffer>
    <experiments>3</experiments>
</comment>
<comment type="subcellular location">
    <subcellularLocation>
        <location evidence="4">Cell inner membrane</location>
    </subcellularLocation>
</comment>
<comment type="induction">
    <text evidence="2">Expression is induced by RpoS during carbon starvation and at stationary phase. Is also regulated by cAMP-CRP. Repressed by CsiR. Makes part of the operon glaH-lhgD-gabDTP.</text>
</comment>
<comment type="similarity">
    <text evidence="1">Belongs to the L2HGDH family.</text>
</comment>
<comment type="caution">
    <text evidence="4 7">Was originally thought to be an oxidase, i.e. using molecular oxygen for oxidation of L-2-hydroxyglutarate and producing hydrogen peroxide. However, no O2 consumption could be detected with L2HG using the purified recombinant and active enzyme (PubMed:30498244).</text>
</comment>
<reference key="1">
    <citation type="journal article" date="1997" name="DNA Res.">
        <title>Construction of a contiguous 874-kb sequence of the Escherichia coli-K12 genome corresponding to 50.0-68.8 min on the linkage map and analysis of its sequence features.</title>
        <authorList>
            <person name="Yamamoto Y."/>
            <person name="Aiba H."/>
            <person name="Baba T."/>
            <person name="Hayashi K."/>
            <person name="Inada T."/>
            <person name="Isono K."/>
            <person name="Itoh T."/>
            <person name="Kimura S."/>
            <person name="Kitagawa M."/>
            <person name="Makino K."/>
            <person name="Miki T."/>
            <person name="Mitsuhashi N."/>
            <person name="Mizobuchi K."/>
            <person name="Mori H."/>
            <person name="Nakade S."/>
            <person name="Nakamura Y."/>
            <person name="Nashimoto H."/>
            <person name="Oshima T."/>
            <person name="Oyama S."/>
            <person name="Saito N."/>
            <person name="Sampei G."/>
            <person name="Satoh Y."/>
            <person name="Sivasundaram S."/>
            <person name="Tagami H."/>
            <person name="Takahashi H."/>
            <person name="Takeda J."/>
            <person name="Takemoto K."/>
            <person name="Uehara K."/>
            <person name="Wada C."/>
            <person name="Yamagata S."/>
            <person name="Horiuchi T."/>
        </authorList>
    </citation>
    <scope>NUCLEOTIDE SEQUENCE [LARGE SCALE GENOMIC DNA]</scope>
    <source>
        <strain>K12 / W3110 / ATCC 27325 / DSM 5911</strain>
    </source>
</reference>
<reference key="2">
    <citation type="journal article" date="1997" name="Science">
        <title>The complete genome sequence of Escherichia coli K-12.</title>
        <authorList>
            <person name="Blattner F.R."/>
            <person name="Plunkett G. III"/>
            <person name="Bloch C.A."/>
            <person name="Perna N.T."/>
            <person name="Burland V."/>
            <person name="Riley M."/>
            <person name="Collado-Vides J."/>
            <person name="Glasner J.D."/>
            <person name="Rode C.K."/>
            <person name="Mayhew G.F."/>
            <person name="Gregor J."/>
            <person name="Davis N.W."/>
            <person name="Kirkpatrick H.A."/>
            <person name="Goeden M.A."/>
            <person name="Rose D.J."/>
            <person name="Mau B."/>
            <person name="Shao Y."/>
        </authorList>
    </citation>
    <scope>NUCLEOTIDE SEQUENCE [LARGE SCALE GENOMIC DNA]</scope>
    <source>
        <strain>K12 / MG1655 / ATCC 47076</strain>
    </source>
</reference>
<reference key="3">
    <citation type="journal article" date="2006" name="Mol. Syst. Biol.">
        <title>Highly accurate genome sequences of Escherichia coli K-12 strains MG1655 and W3110.</title>
        <authorList>
            <person name="Hayashi K."/>
            <person name="Morooka N."/>
            <person name="Yamamoto Y."/>
            <person name="Fujita K."/>
            <person name="Isono K."/>
            <person name="Choi S."/>
            <person name="Ohtsubo E."/>
            <person name="Baba T."/>
            <person name="Wanner B.L."/>
            <person name="Mori H."/>
            <person name="Horiuchi T."/>
        </authorList>
    </citation>
    <scope>NUCLEOTIDE SEQUENCE [LARGE SCALE GENOMIC DNA]</scope>
    <source>
        <strain>K12 / W3110 / ATCC 27325 / DSM 5911</strain>
    </source>
</reference>
<reference key="4">
    <citation type="journal article" date="1993" name="Arch. Microbiol.">
        <title>Molecular organization of the Escherichia coli gab cluster: nucleotide sequence of the structural genes gabD and gabP and expression of the GABA permease gene.</title>
        <authorList>
            <person name="Niegemann E."/>
            <person name="Schulz A."/>
            <person name="Bartsch K."/>
        </authorList>
    </citation>
    <scope>NUCLEOTIDE SEQUENCE [GENOMIC DNA] OF 219-422</scope>
    <source>
        <strain>K12 / JM103 / ATCC 39403 / DSM 2829 / KCTC 1112 / NCIMB 12044</strain>
    </source>
</reference>
<reference key="5">
    <citation type="journal article" date="1994" name="Nucleic Acids Res.">
        <title>Intrinsic and extrinsic approaches for detecting genes in a bacterial genome.</title>
        <authorList>
            <person name="Borodovsky M."/>
            <person name="Rudd K.E."/>
            <person name="Koonin E.V."/>
        </authorList>
    </citation>
    <scope>IDENTIFICATION</scope>
</reference>
<reference key="6">
    <citation type="journal article" date="2004" name="Mol. Microbiol.">
        <title>Multiple stress signal integration in the regulation of the complex sigma S-dependent csiD-ygaF-gabDTP operon in Escherichia coli.</title>
        <authorList>
            <person name="Metzner M."/>
            <person name="Germer J."/>
            <person name="Hengge R."/>
        </authorList>
    </citation>
    <scope>INDUCTION</scope>
    <source>
        <strain>K12 / MC4100 / ATCC 35695 / DSM 6574</strain>
    </source>
</reference>
<reference key="7">
    <citation type="journal article" date="2008" name="J. Bacteriol.">
        <title>Identification of Escherichia coli YgaF as an L-2-hydroxyglutarate oxidase.</title>
        <authorList>
            <person name="Kalliri E."/>
            <person name="Mulrooney S.B."/>
            <person name="Hausinger R.P."/>
        </authorList>
    </citation>
    <scope>COFACTOR</scope>
    <source>
        <strain>K12 / MG1655 / ATCC 47076</strain>
    </source>
</reference>
<reference key="8">
    <citation type="journal article" date="2018" name="Nat. Commun.">
        <title>Widespread bacterial lysine degradation proceeding via glutarate and L-2-hydroxyglutarate.</title>
        <authorList>
            <person name="Knorr S."/>
            <person name="Sinn M."/>
            <person name="Galetskiy D."/>
            <person name="Williams R.M."/>
            <person name="Wang C."/>
            <person name="Mueller N."/>
            <person name="Mayans O."/>
            <person name="Schleheck D."/>
            <person name="Hartig J.S."/>
        </authorList>
    </citation>
    <scope>FUNCTION</scope>
    <scope>CATALYTIC ACTIVITY</scope>
    <scope>COFACTOR</scope>
    <scope>PATHWAY</scope>
    <scope>SUBCELLULAR LOCATION</scope>
    <source>
        <strain>K12 / BW25113</strain>
    </source>
</reference>